<sequence length="234" mass="25311">MSDAANPEGHKRSLPGRPPGIRADSSGLTDRQRRVIEVIRDSVQRRGYPPSMREIGQAVGLSSTSSVAHQLMALERKGFLRRDPHRPRAYEVRGSDQAASVQPTDTAGKPAASYVPLVGRIAAGGPILAEESVEDVFPLPRQLVGDGELFVLKVVGDSMIEAAICDGDWVTVRRQPVAENGDIVAAMLDGEATVKRFKREDGHVWLLPHNSAYEPIPGDDATILGKVVAVLRRV</sequence>
<comment type="function">
    <text evidence="1">Represses a number of genes involved in the response to DNA damage (SOS response), including recA and lexA. In the presence of single-stranded DNA, RecA interacts with LexA causing an autocatalytic cleavage which disrupts the DNA-binding part of LexA, leading to derepression of the SOS regulon and eventually DNA repair.</text>
</comment>
<comment type="catalytic activity">
    <reaction evidence="1">
        <text>Hydrolysis of Ala-|-Gly bond in repressor LexA.</text>
        <dbReference type="EC" id="3.4.21.88"/>
    </reaction>
</comment>
<comment type="subunit">
    <text evidence="1">Homodimer.</text>
</comment>
<comment type="similarity">
    <text evidence="1">Belongs to the peptidase S24 family.</text>
</comment>
<evidence type="ECO:0000255" key="1">
    <source>
        <dbReference type="HAMAP-Rule" id="MF_00015"/>
    </source>
</evidence>
<evidence type="ECO:0000256" key="2">
    <source>
        <dbReference type="SAM" id="MobiDB-lite"/>
    </source>
</evidence>
<reference key="1">
    <citation type="journal article" date="2002" name="Nature">
        <title>Complete genome sequence of the model actinomycete Streptomyces coelicolor A3(2).</title>
        <authorList>
            <person name="Bentley S.D."/>
            <person name="Chater K.F."/>
            <person name="Cerdeno-Tarraga A.-M."/>
            <person name="Challis G.L."/>
            <person name="Thomson N.R."/>
            <person name="James K.D."/>
            <person name="Harris D.E."/>
            <person name="Quail M.A."/>
            <person name="Kieser H."/>
            <person name="Harper D."/>
            <person name="Bateman A."/>
            <person name="Brown S."/>
            <person name="Chandra G."/>
            <person name="Chen C.W."/>
            <person name="Collins M."/>
            <person name="Cronin A."/>
            <person name="Fraser A."/>
            <person name="Goble A."/>
            <person name="Hidalgo J."/>
            <person name="Hornsby T."/>
            <person name="Howarth S."/>
            <person name="Huang C.-H."/>
            <person name="Kieser T."/>
            <person name="Larke L."/>
            <person name="Murphy L.D."/>
            <person name="Oliver K."/>
            <person name="O'Neil S."/>
            <person name="Rabbinowitsch E."/>
            <person name="Rajandream M.A."/>
            <person name="Rutherford K.M."/>
            <person name="Rutter S."/>
            <person name="Seeger K."/>
            <person name="Saunders D."/>
            <person name="Sharp S."/>
            <person name="Squares R."/>
            <person name="Squares S."/>
            <person name="Taylor K."/>
            <person name="Warren T."/>
            <person name="Wietzorrek A."/>
            <person name="Woodward J.R."/>
            <person name="Barrell B.G."/>
            <person name="Parkhill J."/>
            <person name="Hopwood D.A."/>
        </authorList>
    </citation>
    <scope>NUCLEOTIDE SEQUENCE [LARGE SCALE GENOMIC DNA]</scope>
    <source>
        <strain>ATCC BAA-471 / A3(2) / M145</strain>
    </source>
</reference>
<gene>
    <name evidence="1" type="primary">lexA</name>
    <name type="ordered locus">SCO5803</name>
    <name type="ORF">SC4H2.24c</name>
</gene>
<proteinExistence type="inferred from homology"/>
<dbReference type="EC" id="3.4.21.88" evidence="1"/>
<dbReference type="EMBL" id="AL939125">
    <property type="protein sequence ID" value="CAA18339.1"/>
    <property type="molecule type" value="Genomic_DNA"/>
</dbReference>
<dbReference type="PIR" id="T35123">
    <property type="entry name" value="T35123"/>
</dbReference>
<dbReference type="RefSeq" id="NP_629927.1">
    <property type="nucleotide sequence ID" value="NC_003888.3"/>
</dbReference>
<dbReference type="SMR" id="O69979"/>
<dbReference type="FunCoup" id="O69979">
    <property type="interactions" value="8"/>
</dbReference>
<dbReference type="STRING" id="100226.gene:17763463"/>
<dbReference type="MEROPS" id="S24.001"/>
<dbReference type="PaxDb" id="100226-SCO5803"/>
<dbReference type="KEGG" id="sco:SCO5803"/>
<dbReference type="PATRIC" id="fig|100226.15.peg.5895"/>
<dbReference type="eggNOG" id="COG1974">
    <property type="taxonomic scope" value="Bacteria"/>
</dbReference>
<dbReference type="HOGENOM" id="CLU_066192_45_0_11"/>
<dbReference type="InParanoid" id="O69979"/>
<dbReference type="OrthoDB" id="9802364at2"/>
<dbReference type="PhylomeDB" id="O69979"/>
<dbReference type="Proteomes" id="UP000001973">
    <property type="component" value="Chromosome"/>
</dbReference>
<dbReference type="GO" id="GO:0032993">
    <property type="term" value="C:protein-DNA complex"/>
    <property type="evidence" value="ECO:0000318"/>
    <property type="project" value="GO_Central"/>
</dbReference>
<dbReference type="GO" id="GO:0001217">
    <property type="term" value="F:DNA-binding transcription repressor activity"/>
    <property type="evidence" value="ECO:0000318"/>
    <property type="project" value="GO_Central"/>
</dbReference>
<dbReference type="GO" id="GO:0043565">
    <property type="term" value="F:sequence-specific DNA binding"/>
    <property type="evidence" value="ECO:0000318"/>
    <property type="project" value="GO_Central"/>
</dbReference>
<dbReference type="GO" id="GO:0004252">
    <property type="term" value="F:serine-type endopeptidase activity"/>
    <property type="evidence" value="ECO:0007669"/>
    <property type="project" value="UniProtKB-UniRule"/>
</dbReference>
<dbReference type="GO" id="GO:0006281">
    <property type="term" value="P:DNA repair"/>
    <property type="evidence" value="ECO:0007669"/>
    <property type="project" value="UniProtKB-UniRule"/>
</dbReference>
<dbReference type="GO" id="GO:0006260">
    <property type="term" value="P:DNA replication"/>
    <property type="evidence" value="ECO:0007669"/>
    <property type="project" value="UniProtKB-UniRule"/>
</dbReference>
<dbReference type="GO" id="GO:0045892">
    <property type="term" value="P:negative regulation of DNA-templated transcription"/>
    <property type="evidence" value="ECO:0000318"/>
    <property type="project" value="GO_Central"/>
</dbReference>
<dbReference type="GO" id="GO:0006508">
    <property type="term" value="P:proteolysis"/>
    <property type="evidence" value="ECO:0007669"/>
    <property type="project" value="InterPro"/>
</dbReference>
<dbReference type="GO" id="GO:0009432">
    <property type="term" value="P:SOS response"/>
    <property type="evidence" value="ECO:0000318"/>
    <property type="project" value="GO_Central"/>
</dbReference>
<dbReference type="CDD" id="cd06529">
    <property type="entry name" value="S24_LexA-like"/>
    <property type="match status" value="1"/>
</dbReference>
<dbReference type="FunFam" id="1.10.10.10:FF:000009">
    <property type="entry name" value="LexA repressor"/>
    <property type="match status" value="1"/>
</dbReference>
<dbReference type="FunFam" id="2.10.109.10:FF:000001">
    <property type="entry name" value="LexA repressor"/>
    <property type="match status" value="1"/>
</dbReference>
<dbReference type="Gene3D" id="2.10.109.10">
    <property type="entry name" value="Umud Fragment, subunit A"/>
    <property type="match status" value="1"/>
</dbReference>
<dbReference type="Gene3D" id="1.10.10.10">
    <property type="entry name" value="Winged helix-like DNA-binding domain superfamily/Winged helix DNA-binding domain"/>
    <property type="match status" value="1"/>
</dbReference>
<dbReference type="HAMAP" id="MF_00015">
    <property type="entry name" value="LexA"/>
    <property type="match status" value="1"/>
</dbReference>
<dbReference type="InterPro" id="IPR006200">
    <property type="entry name" value="LexA"/>
</dbReference>
<dbReference type="InterPro" id="IPR039418">
    <property type="entry name" value="LexA-like"/>
</dbReference>
<dbReference type="InterPro" id="IPR036286">
    <property type="entry name" value="LexA/Signal_pep-like_sf"/>
</dbReference>
<dbReference type="InterPro" id="IPR006199">
    <property type="entry name" value="LexA_DNA-bd_dom"/>
</dbReference>
<dbReference type="InterPro" id="IPR050077">
    <property type="entry name" value="LexA_repressor"/>
</dbReference>
<dbReference type="InterPro" id="IPR006197">
    <property type="entry name" value="Peptidase_S24_LexA"/>
</dbReference>
<dbReference type="InterPro" id="IPR015927">
    <property type="entry name" value="Peptidase_S24_S26A/B/C"/>
</dbReference>
<dbReference type="InterPro" id="IPR036388">
    <property type="entry name" value="WH-like_DNA-bd_sf"/>
</dbReference>
<dbReference type="InterPro" id="IPR036390">
    <property type="entry name" value="WH_DNA-bd_sf"/>
</dbReference>
<dbReference type="NCBIfam" id="TIGR00498">
    <property type="entry name" value="lexA"/>
    <property type="match status" value="1"/>
</dbReference>
<dbReference type="PANTHER" id="PTHR33516">
    <property type="entry name" value="LEXA REPRESSOR"/>
    <property type="match status" value="1"/>
</dbReference>
<dbReference type="PANTHER" id="PTHR33516:SF2">
    <property type="entry name" value="LEXA REPRESSOR-RELATED"/>
    <property type="match status" value="1"/>
</dbReference>
<dbReference type="Pfam" id="PF01726">
    <property type="entry name" value="LexA_DNA_bind"/>
    <property type="match status" value="1"/>
</dbReference>
<dbReference type="Pfam" id="PF00717">
    <property type="entry name" value="Peptidase_S24"/>
    <property type="match status" value="1"/>
</dbReference>
<dbReference type="PRINTS" id="PR00726">
    <property type="entry name" value="LEXASERPTASE"/>
</dbReference>
<dbReference type="SUPFAM" id="SSF51306">
    <property type="entry name" value="LexA/Signal peptidase"/>
    <property type="match status" value="1"/>
</dbReference>
<dbReference type="SUPFAM" id="SSF46785">
    <property type="entry name" value="Winged helix' DNA-binding domain"/>
    <property type="match status" value="1"/>
</dbReference>
<organism>
    <name type="scientific">Streptomyces coelicolor (strain ATCC BAA-471 / A3(2) / M145)</name>
    <dbReference type="NCBI Taxonomy" id="100226"/>
    <lineage>
        <taxon>Bacteria</taxon>
        <taxon>Bacillati</taxon>
        <taxon>Actinomycetota</taxon>
        <taxon>Actinomycetes</taxon>
        <taxon>Kitasatosporales</taxon>
        <taxon>Streptomycetaceae</taxon>
        <taxon>Streptomyces</taxon>
        <taxon>Streptomyces albidoflavus group</taxon>
    </lineage>
</organism>
<accession>O69979</accession>
<name>LEXA_STRCO</name>
<feature type="chain" id="PRO_0000170096" description="LexA repressor">
    <location>
        <begin position="1"/>
        <end position="234"/>
    </location>
</feature>
<feature type="DNA-binding region" description="H-T-H motif" evidence="1">
    <location>
        <begin position="52"/>
        <end position="72"/>
    </location>
</feature>
<feature type="region of interest" description="Disordered" evidence="2">
    <location>
        <begin position="1"/>
        <end position="29"/>
    </location>
</feature>
<feature type="region of interest" description="Disordered" evidence="2">
    <location>
        <begin position="90"/>
        <end position="109"/>
    </location>
</feature>
<feature type="active site" description="For autocatalytic cleavage activity" evidence="1">
    <location>
        <position position="158"/>
    </location>
</feature>
<feature type="active site" description="For autocatalytic cleavage activity" evidence="1">
    <location>
        <position position="195"/>
    </location>
</feature>
<feature type="site" description="Cleavage; by autolysis" evidence="1">
    <location>
        <begin position="123"/>
        <end position="124"/>
    </location>
</feature>
<keyword id="KW-0068">Autocatalytic cleavage</keyword>
<keyword id="KW-0227">DNA damage</keyword>
<keyword id="KW-0234">DNA repair</keyword>
<keyword id="KW-0235">DNA replication</keyword>
<keyword id="KW-0238">DNA-binding</keyword>
<keyword id="KW-0378">Hydrolase</keyword>
<keyword id="KW-1185">Reference proteome</keyword>
<keyword id="KW-0678">Repressor</keyword>
<keyword id="KW-0742">SOS response</keyword>
<keyword id="KW-0804">Transcription</keyword>
<keyword id="KW-0805">Transcription regulation</keyword>
<protein>
    <recommendedName>
        <fullName evidence="1">LexA repressor</fullName>
        <ecNumber evidence="1">3.4.21.88</ecNumber>
    </recommendedName>
</protein>